<dbReference type="EC" id="5.1.1.1" evidence="1"/>
<dbReference type="EMBL" id="CP000143">
    <property type="protein sequence ID" value="ABA78620.1"/>
    <property type="molecule type" value="Genomic_DNA"/>
</dbReference>
<dbReference type="RefSeq" id="WP_011337504.1">
    <property type="nucleotide sequence ID" value="NC_007493.2"/>
</dbReference>
<dbReference type="RefSeq" id="YP_352521.1">
    <property type="nucleotide sequence ID" value="NC_007493.2"/>
</dbReference>
<dbReference type="SMR" id="Q3J3L4"/>
<dbReference type="STRING" id="272943.RSP_2460"/>
<dbReference type="EnsemblBacteria" id="ABA78620">
    <property type="protein sequence ID" value="ABA78620"/>
    <property type="gene ID" value="RSP_2460"/>
</dbReference>
<dbReference type="GeneID" id="3720076"/>
<dbReference type="KEGG" id="rsp:RSP_2460"/>
<dbReference type="PATRIC" id="fig|272943.9.peg.1378"/>
<dbReference type="eggNOG" id="COG0787">
    <property type="taxonomic scope" value="Bacteria"/>
</dbReference>
<dbReference type="OrthoDB" id="9813814at2"/>
<dbReference type="PhylomeDB" id="Q3J3L4"/>
<dbReference type="UniPathway" id="UPA00042">
    <property type="reaction ID" value="UER00497"/>
</dbReference>
<dbReference type="Proteomes" id="UP000002703">
    <property type="component" value="Chromosome 1"/>
</dbReference>
<dbReference type="GO" id="GO:0005829">
    <property type="term" value="C:cytosol"/>
    <property type="evidence" value="ECO:0007669"/>
    <property type="project" value="TreeGrafter"/>
</dbReference>
<dbReference type="GO" id="GO:0008784">
    <property type="term" value="F:alanine racemase activity"/>
    <property type="evidence" value="ECO:0007669"/>
    <property type="project" value="UniProtKB-UniRule"/>
</dbReference>
<dbReference type="GO" id="GO:0030170">
    <property type="term" value="F:pyridoxal phosphate binding"/>
    <property type="evidence" value="ECO:0007669"/>
    <property type="project" value="UniProtKB-UniRule"/>
</dbReference>
<dbReference type="GO" id="GO:0030632">
    <property type="term" value="P:D-alanine biosynthetic process"/>
    <property type="evidence" value="ECO:0007669"/>
    <property type="project" value="UniProtKB-UniRule"/>
</dbReference>
<dbReference type="CDD" id="cd00430">
    <property type="entry name" value="PLPDE_III_AR"/>
    <property type="match status" value="1"/>
</dbReference>
<dbReference type="Gene3D" id="3.20.20.10">
    <property type="entry name" value="Alanine racemase"/>
    <property type="match status" value="1"/>
</dbReference>
<dbReference type="Gene3D" id="2.40.37.10">
    <property type="entry name" value="Lyase, Ornithine Decarboxylase, Chain A, domain 1"/>
    <property type="match status" value="1"/>
</dbReference>
<dbReference type="HAMAP" id="MF_01201">
    <property type="entry name" value="Ala_racemase"/>
    <property type="match status" value="1"/>
</dbReference>
<dbReference type="InterPro" id="IPR000821">
    <property type="entry name" value="Ala_racemase"/>
</dbReference>
<dbReference type="InterPro" id="IPR009006">
    <property type="entry name" value="Ala_racemase/Decarboxylase_C"/>
</dbReference>
<dbReference type="InterPro" id="IPR011079">
    <property type="entry name" value="Ala_racemase_C"/>
</dbReference>
<dbReference type="InterPro" id="IPR001608">
    <property type="entry name" value="Ala_racemase_N"/>
</dbReference>
<dbReference type="InterPro" id="IPR029066">
    <property type="entry name" value="PLP-binding_barrel"/>
</dbReference>
<dbReference type="NCBIfam" id="TIGR00492">
    <property type="entry name" value="alr"/>
    <property type="match status" value="1"/>
</dbReference>
<dbReference type="PANTHER" id="PTHR30511">
    <property type="entry name" value="ALANINE RACEMASE"/>
    <property type="match status" value="1"/>
</dbReference>
<dbReference type="PANTHER" id="PTHR30511:SF0">
    <property type="entry name" value="ALANINE RACEMASE, CATABOLIC-RELATED"/>
    <property type="match status" value="1"/>
</dbReference>
<dbReference type="Pfam" id="PF00842">
    <property type="entry name" value="Ala_racemase_C"/>
    <property type="match status" value="1"/>
</dbReference>
<dbReference type="Pfam" id="PF01168">
    <property type="entry name" value="Ala_racemase_N"/>
    <property type="match status" value="1"/>
</dbReference>
<dbReference type="PRINTS" id="PR00992">
    <property type="entry name" value="ALARACEMASE"/>
</dbReference>
<dbReference type="SMART" id="SM01005">
    <property type="entry name" value="Ala_racemase_C"/>
    <property type="match status" value="1"/>
</dbReference>
<dbReference type="SUPFAM" id="SSF50621">
    <property type="entry name" value="Alanine racemase C-terminal domain-like"/>
    <property type="match status" value="1"/>
</dbReference>
<dbReference type="SUPFAM" id="SSF51419">
    <property type="entry name" value="PLP-binding barrel"/>
    <property type="match status" value="1"/>
</dbReference>
<feature type="chain" id="PRO_1000138618" description="Alanine racemase">
    <location>
        <begin position="1"/>
        <end position="349"/>
    </location>
</feature>
<feature type="active site" description="Proton acceptor; specific for D-alanine" evidence="1">
    <location>
        <position position="35"/>
    </location>
</feature>
<feature type="active site" description="Proton acceptor; specific for L-alanine" evidence="1">
    <location>
        <position position="244"/>
    </location>
</feature>
<feature type="binding site" evidence="1">
    <location>
        <position position="130"/>
    </location>
    <ligand>
        <name>substrate</name>
    </ligand>
</feature>
<feature type="binding site" evidence="1">
    <location>
        <position position="292"/>
    </location>
    <ligand>
        <name>substrate</name>
    </ligand>
</feature>
<feature type="modified residue" description="N6-(pyridoxal phosphate)lysine" evidence="1">
    <location>
        <position position="35"/>
    </location>
</feature>
<proteinExistence type="inferred from homology"/>
<reference key="1">
    <citation type="submission" date="2005-09" db="EMBL/GenBank/DDBJ databases">
        <title>Complete sequence of chromosome 1 of Rhodobacter sphaeroides 2.4.1.</title>
        <authorList>
            <person name="Copeland A."/>
            <person name="Lucas S."/>
            <person name="Lapidus A."/>
            <person name="Barry K."/>
            <person name="Detter J.C."/>
            <person name="Glavina T."/>
            <person name="Hammon N."/>
            <person name="Israni S."/>
            <person name="Pitluck S."/>
            <person name="Richardson P."/>
            <person name="Mackenzie C."/>
            <person name="Choudhary M."/>
            <person name="Larimer F."/>
            <person name="Hauser L.J."/>
            <person name="Land M."/>
            <person name="Donohue T.J."/>
            <person name="Kaplan S."/>
        </authorList>
    </citation>
    <scope>NUCLEOTIDE SEQUENCE [LARGE SCALE GENOMIC DNA]</scope>
    <source>
        <strain>ATCC 17023 / DSM 158 / JCM 6121 / CCUG 31486 / LMG 2827 / NBRC 12203 / NCIMB 8253 / ATH 2.4.1.</strain>
    </source>
</reference>
<sequence>MATATLTIDLDAIAANWRALDQMTASDCQTGAVVKADSYGLGAAKVAHALARAGARRFFVATCEEGADVRRALGSGPQICVFSGHMEGDTALIRDFDLTPMLNSIDQLTRHFEALGGQPFGLQLDSGMNRLGLEPGEWEAVAGFALEAGPELLMSHLACSDDPDHPMNAEQLGAFRAMTDGTGVPRSLSATGGILLGPAWHFELTRPGIGLYGGRPFENARPVVRLSLPVIQVREVEIGEPVGYSNTWTAEHTSTIATVAAGYADGLPRTLSSRATLYAGRVPCPLVGRVSMDLITVDVSHLPEVPETLDILGPHQTPDDLADTAGTIGYEILTSLGRRYQRRYGALAA</sequence>
<comment type="function">
    <text evidence="1">Catalyzes the interconversion of L-alanine and D-alanine. May also act on other amino acids.</text>
</comment>
<comment type="catalytic activity">
    <reaction evidence="1">
        <text>L-alanine = D-alanine</text>
        <dbReference type="Rhea" id="RHEA:20249"/>
        <dbReference type="ChEBI" id="CHEBI:57416"/>
        <dbReference type="ChEBI" id="CHEBI:57972"/>
        <dbReference type="EC" id="5.1.1.1"/>
    </reaction>
</comment>
<comment type="cofactor">
    <cofactor evidence="1">
        <name>pyridoxal 5'-phosphate</name>
        <dbReference type="ChEBI" id="CHEBI:597326"/>
    </cofactor>
</comment>
<comment type="pathway">
    <text evidence="1">Amino-acid biosynthesis; D-alanine biosynthesis; D-alanine from L-alanine: step 1/1.</text>
</comment>
<comment type="similarity">
    <text evidence="1">Belongs to the alanine racemase family.</text>
</comment>
<keyword id="KW-0413">Isomerase</keyword>
<keyword id="KW-0663">Pyridoxal phosphate</keyword>
<keyword id="KW-1185">Reference proteome</keyword>
<name>ALR_CERS4</name>
<evidence type="ECO:0000255" key="1">
    <source>
        <dbReference type="HAMAP-Rule" id="MF_01201"/>
    </source>
</evidence>
<gene>
    <name type="primary">alr</name>
    <name type="ordered locus">RHOS4_10520</name>
    <name type="ORF">RSP_2460</name>
</gene>
<protein>
    <recommendedName>
        <fullName evidence="1">Alanine racemase</fullName>
        <ecNumber evidence="1">5.1.1.1</ecNumber>
    </recommendedName>
</protein>
<organism>
    <name type="scientific">Cereibacter sphaeroides (strain ATCC 17023 / DSM 158 / JCM 6121 / CCUG 31486 / LMG 2827 / NBRC 12203 / NCIMB 8253 / ATH 2.4.1.)</name>
    <name type="common">Rhodobacter sphaeroides</name>
    <dbReference type="NCBI Taxonomy" id="272943"/>
    <lineage>
        <taxon>Bacteria</taxon>
        <taxon>Pseudomonadati</taxon>
        <taxon>Pseudomonadota</taxon>
        <taxon>Alphaproteobacteria</taxon>
        <taxon>Rhodobacterales</taxon>
        <taxon>Paracoccaceae</taxon>
        <taxon>Cereibacter</taxon>
    </lineage>
</organism>
<accession>Q3J3L4</accession>